<accession>A1CU59</accession>
<evidence type="ECO:0000250" key="1"/>
<evidence type="ECO:0000255" key="2"/>
<evidence type="ECO:0000255" key="3">
    <source>
        <dbReference type="PROSITE-ProRule" id="PRU01097"/>
    </source>
</evidence>
<evidence type="ECO:0000255" key="4">
    <source>
        <dbReference type="PROSITE-ProRule" id="PRU10062"/>
    </source>
</evidence>
<evidence type="ECO:0000305" key="5"/>
<gene>
    <name type="primary">xlnB</name>
    <name type="synonym">xynB</name>
    <name type="synonym">xynG1</name>
    <name type="ORF">ACLA_085410</name>
</gene>
<comment type="function">
    <text evidence="1">Endo-1,4-beta-xylanase involved in the hydrolysis of xylan, a major structural heterogeneous polysaccharide found in plant biomass representing the second most abundant polysaccharide in the biosphere, after cellulose.</text>
</comment>
<comment type="catalytic activity">
    <reaction>
        <text>Endohydrolysis of (1-&gt;4)-beta-D-xylosidic linkages in xylans.</text>
        <dbReference type="EC" id="3.2.1.8"/>
    </reaction>
</comment>
<comment type="pathway">
    <text>Glycan degradation; xylan degradation.</text>
</comment>
<comment type="subcellular location">
    <subcellularLocation>
        <location evidence="1">Secreted</location>
    </subcellularLocation>
</comment>
<comment type="similarity">
    <text evidence="5">Belongs to the glycosyl hydrolase 11 (cellulase G) family.</text>
</comment>
<comment type="sequence caution" evidence="5">
    <conflict type="erroneous initiation">
        <sequence resource="EMBL-CDS" id="EAW06846"/>
    </conflict>
</comment>
<name>XYNB_ASPCL</name>
<proteinExistence type="inferred from homology"/>
<reference key="1">
    <citation type="journal article" date="2008" name="PLoS Genet.">
        <title>Genomic islands in the pathogenic filamentous fungus Aspergillus fumigatus.</title>
        <authorList>
            <person name="Fedorova N.D."/>
            <person name="Khaldi N."/>
            <person name="Joardar V.S."/>
            <person name="Maiti R."/>
            <person name="Amedeo P."/>
            <person name="Anderson M.J."/>
            <person name="Crabtree J."/>
            <person name="Silva J.C."/>
            <person name="Badger J.H."/>
            <person name="Albarraq A."/>
            <person name="Angiuoli S."/>
            <person name="Bussey H."/>
            <person name="Bowyer P."/>
            <person name="Cotty P.J."/>
            <person name="Dyer P.S."/>
            <person name="Egan A."/>
            <person name="Galens K."/>
            <person name="Fraser-Liggett C.M."/>
            <person name="Haas B.J."/>
            <person name="Inman J.M."/>
            <person name="Kent R."/>
            <person name="Lemieux S."/>
            <person name="Malavazi I."/>
            <person name="Orvis J."/>
            <person name="Roemer T."/>
            <person name="Ronning C.M."/>
            <person name="Sundaram J.P."/>
            <person name="Sutton G."/>
            <person name="Turner G."/>
            <person name="Venter J.C."/>
            <person name="White O.R."/>
            <person name="Whitty B.R."/>
            <person name="Youngman P."/>
            <person name="Wolfe K.H."/>
            <person name="Goldman G.H."/>
            <person name="Wortman J.R."/>
            <person name="Jiang B."/>
            <person name="Denning D.W."/>
            <person name="Nierman W.C."/>
        </authorList>
    </citation>
    <scope>NUCLEOTIDE SEQUENCE [LARGE SCALE GENOMIC DNA]</scope>
    <source>
        <strain>ATCC 1007 / CBS 513.65 / DSM 816 / NCTC 3887 / NRRL 1 / QM 1276 / 107</strain>
    </source>
</reference>
<protein>
    <recommendedName>
        <fullName>Probable endo-1,4-beta-xylanase B</fullName>
        <shortName>Xylanase B</shortName>
        <ecNumber>3.2.1.8</ecNumber>
    </recommendedName>
    <alternativeName>
        <fullName>1,4-beta-D-xylan xylanohydrolase B</fullName>
    </alternativeName>
    <alternativeName>
        <fullName>Endo-1,4-beta-xylanase G1</fullName>
        <shortName>Xylanase G1</shortName>
    </alternativeName>
</protein>
<sequence>MVSFSSLALALSTVVGVLAAPGSEKYVELAKHQLTHSQTGTKNGYYYSFWTDNRGQVSYTNGKGGQYSVNWKDCGNFVAGKGWNPASAKTVTYSGNWKPSGNSYVSVYGWTQNPLIEFYIVESFGSYNPSTGATELGTVESDGGTYKIYKTKRVDAPSIEGKKTFDQFWSVRTSHRVGGTVTTKNHFNAWAKSGLKLGTFNYMILATEGYHSSGSATMTVS</sequence>
<organism>
    <name type="scientific">Aspergillus clavatus (strain ATCC 1007 / CBS 513.65 / DSM 816 / NCTC 3887 / NRRL 1 / QM 1276 / 107)</name>
    <dbReference type="NCBI Taxonomy" id="344612"/>
    <lineage>
        <taxon>Eukaryota</taxon>
        <taxon>Fungi</taxon>
        <taxon>Dikarya</taxon>
        <taxon>Ascomycota</taxon>
        <taxon>Pezizomycotina</taxon>
        <taxon>Eurotiomycetes</taxon>
        <taxon>Eurotiomycetidae</taxon>
        <taxon>Eurotiales</taxon>
        <taxon>Aspergillaceae</taxon>
        <taxon>Aspergillus</taxon>
        <taxon>Aspergillus subgen. Fumigati</taxon>
    </lineage>
</organism>
<dbReference type="EC" id="3.2.1.8"/>
<dbReference type="EMBL" id="DS027060">
    <property type="protein sequence ID" value="EAW06846.1"/>
    <property type="status" value="ALT_INIT"/>
    <property type="molecule type" value="Genomic_DNA"/>
</dbReference>
<dbReference type="RefSeq" id="XP_001268272.1">
    <property type="nucleotide sequence ID" value="XM_001268271.1"/>
</dbReference>
<dbReference type="SMR" id="A1CU59"/>
<dbReference type="STRING" id="344612.A1CU59"/>
<dbReference type="EnsemblFungi" id="EAW06846">
    <property type="protein sequence ID" value="EAW06846"/>
    <property type="gene ID" value="ACLA_085410"/>
</dbReference>
<dbReference type="GeneID" id="4699767"/>
<dbReference type="KEGG" id="act:ACLA_085410"/>
<dbReference type="eggNOG" id="ENOG502RXA7">
    <property type="taxonomic scope" value="Eukaryota"/>
</dbReference>
<dbReference type="OrthoDB" id="2115822at2759"/>
<dbReference type="UniPathway" id="UPA00114"/>
<dbReference type="Proteomes" id="UP000006701">
    <property type="component" value="Unassembled WGS sequence"/>
</dbReference>
<dbReference type="GO" id="GO:0005576">
    <property type="term" value="C:extracellular region"/>
    <property type="evidence" value="ECO:0000250"/>
    <property type="project" value="UniProtKB"/>
</dbReference>
<dbReference type="GO" id="GO:0031176">
    <property type="term" value="F:endo-1,4-beta-xylanase activity"/>
    <property type="evidence" value="ECO:0000250"/>
    <property type="project" value="UniProtKB"/>
</dbReference>
<dbReference type="GO" id="GO:0045493">
    <property type="term" value="P:xylan catabolic process"/>
    <property type="evidence" value="ECO:0000250"/>
    <property type="project" value="UniProtKB"/>
</dbReference>
<dbReference type="FunFam" id="2.60.120.180:FF:000001">
    <property type="entry name" value="Endo-1,4-beta-xylanase"/>
    <property type="match status" value="1"/>
</dbReference>
<dbReference type="Gene3D" id="2.60.120.180">
    <property type="match status" value="1"/>
</dbReference>
<dbReference type="InterPro" id="IPR013320">
    <property type="entry name" value="ConA-like_dom_sf"/>
</dbReference>
<dbReference type="InterPro" id="IPR013319">
    <property type="entry name" value="GH11/12"/>
</dbReference>
<dbReference type="InterPro" id="IPR018208">
    <property type="entry name" value="GH11_AS_1"/>
</dbReference>
<dbReference type="InterPro" id="IPR033123">
    <property type="entry name" value="GH11_dom"/>
</dbReference>
<dbReference type="InterPro" id="IPR001137">
    <property type="entry name" value="Glyco_hydro_11"/>
</dbReference>
<dbReference type="PANTHER" id="PTHR46828">
    <property type="entry name" value="ENDO-1,4-BETA-XYLANASE A-RELATED"/>
    <property type="match status" value="1"/>
</dbReference>
<dbReference type="PANTHER" id="PTHR46828:SF2">
    <property type="entry name" value="ENDO-1,4-BETA-XYLANASE A-RELATED"/>
    <property type="match status" value="1"/>
</dbReference>
<dbReference type="Pfam" id="PF00457">
    <property type="entry name" value="Glyco_hydro_11"/>
    <property type="match status" value="1"/>
</dbReference>
<dbReference type="PRINTS" id="PR00911">
    <property type="entry name" value="GLHYDRLASE11"/>
</dbReference>
<dbReference type="SUPFAM" id="SSF49899">
    <property type="entry name" value="Concanavalin A-like lectins/glucanases"/>
    <property type="match status" value="1"/>
</dbReference>
<dbReference type="PROSITE" id="PS00776">
    <property type="entry name" value="GH11_1"/>
    <property type="match status" value="1"/>
</dbReference>
<dbReference type="PROSITE" id="PS51761">
    <property type="entry name" value="GH11_3"/>
    <property type="match status" value="1"/>
</dbReference>
<keyword id="KW-0119">Carbohydrate metabolism</keyword>
<keyword id="KW-0326">Glycosidase</keyword>
<keyword id="KW-0378">Hydrolase</keyword>
<keyword id="KW-0624">Polysaccharide degradation</keyword>
<keyword id="KW-1185">Reference proteome</keyword>
<keyword id="KW-0964">Secreted</keyword>
<keyword id="KW-0732">Signal</keyword>
<keyword id="KW-0858">Xylan degradation</keyword>
<feature type="signal peptide" evidence="2">
    <location>
        <begin position="1"/>
        <end position="19"/>
    </location>
</feature>
<feature type="chain" id="PRO_0000393165" description="Probable endo-1,4-beta-xylanase B">
    <location>
        <begin position="20"/>
        <end position="221"/>
    </location>
</feature>
<feature type="domain" description="GH11" evidence="3">
    <location>
        <begin position="33"/>
        <end position="221"/>
    </location>
</feature>
<feature type="active site" description="Nucleophile" evidence="4">
    <location>
        <position position="117"/>
    </location>
</feature>
<feature type="active site" description="Proton donor" evidence="1">
    <location>
        <position position="208"/>
    </location>
</feature>